<protein>
    <recommendedName>
        <fullName evidence="1">Probable GTP-binding protein EngB</fullName>
    </recommendedName>
</protein>
<feature type="chain" id="PRO_0000157748" description="Probable GTP-binding protein EngB">
    <location>
        <begin position="1"/>
        <end position="210"/>
    </location>
</feature>
<feature type="domain" description="EngB-type G" evidence="1">
    <location>
        <begin position="25"/>
        <end position="199"/>
    </location>
</feature>
<feature type="binding site" evidence="1">
    <location>
        <begin position="33"/>
        <end position="40"/>
    </location>
    <ligand>
        <name>GTP</name>
        <dbReference type="ChEBI" id="CHEBI:37565"/>
    </ligand>
</feature>
<feature type="binding site" evidence="1">
    <location>
        <position position="40"/>
    </location>
    <ligand>
        <name>Mg(2+)</name>
        <dbReference type="ChEBI" id="CHEBI:18420"/>
    </ligand>
</feature>
<feature type="binding site" evidence="1">
    <location>
        <begin position="60"/>
        <end position="64"/>
    </location>
    <ligand>
        <name>GTP</name>
        <dbReference type="ChEBI" id="CHEBI:37565"/>
    </ligand>
</feature>
<feature type="binding site" evidence="1">
    <location>
        <position position="62"/>
    </location>
    <ligand>
        <name>Mg(2+)</name>
        <dbReference type="ChEBI" id="CHEBI:18420"/>
    </ligand>
</feature>
<feature type="binding site" evidence="1">
    <location>
        <begin position="78"/>
        <end position="81"/>
    </location>
    <ligand>
        <name>GTP</name>
        <dbReference type="ChEBI" id="CHEBI:37565"/>
    </ligand>
</feature>
<feature type="binding site" evidence="1">
    <location>
        <begin position="145"/>
        <end position="148"/>
    </location>
    <ligand>
        <name>GTP</name>
        <dbReference type="ChEBI" id="CHEBI:37565"/>
    </ligand>
</feature>
<feature type="binding site" evidence="1">
    <location>
        <begin position="178"/>
        <end position="180"/>
    </location>
    <ligand>
        <name>GTP</name>
        <dbReference type="ChEBI" id="CHEBI:37565"/>
    </ligand>
</feature>
<sequence length="210" mass="23561">MTNLNYQQTHFVMSAPDIRHLPSDTGIEVAFAGRSNAGKSSALNTLTNQKSLARTSKTPGRTQLINLFEVADGKRLVDLPGYGYAEVPEEMKRKWQRALGEYLEKRQSLQGLVVLMDIRHPLKDLDQQMIEWAVDSNIAVLVLLTKADKLASGARKAQLNMVREAVLAFNGDVQVETFSSLKKQGVDKLRQKLDTWFSEMQPVEETQDGE</sequence>
<name>ENGB_ECOL6</name>
<keyword id="KW-0131">Cell cycle</keyword>
<keyword id="KW-0132">Cell division</keyword>
<keyword id="KW-0342">GTP-binding</keyword>
<keyword id="KW-0460">Magnesium</keyword>
<keyword id="KW-0479">Metal-binding</keyword>
<keyword id="KW-0547">Nucleotide-binding</keyword>
<keyword id="KW-1185">Reference proteome</keyword>
<keyword id="KW-0717">Septation</keyword>
<evidence type="ECO:0000255" key="1">
    <source>
        <dbReference type="HAMAP-Rule" id="MF_00321"/>
    </source>
</evidence>
<evidence type="ECO:0000305" key="2"/>
<proteinExistence type="inferred from homology"/>
<accession>P0A6P8</accession>
<accession>P24253</accession>
<accession>P76771</accession>
<comment type="function">
    <text evidence="1">Necessary for normal cell division and for the maintenance of normal septation.</text>
</comment>
<comment type="cofactor">
    <cofactor evidence="1">
        <name>Mg(2+)</name>
        <dbReference type="ChEBI" id="CHEBI:18420"/>
    </cofactor>
</comment>
<comment type="similarity">
    <text evidence="1">Belongs to the TRAFAC class TrmE-Era-EngA-EngB-Septin-like GTPase superfamily. EngB GTPase family.</text>
</comment>
<comment type="sequence caution" evidence="2">
    <conflict type="erroneous initiation">
        <sequence resource="EMBL-CDS" id="AAN83241"/>
    </conflict>
</comment>
<organism>
    <name type="scientific">Escherichia coli O6:H1 (strain CFT073 / ATCC 700928 / UPEC)</name>
    <dbReference type="NCBI Taxonomy" id="199310"/>
    <lineage>
        <taxon>Bacteria</taxon>
        <taxon>Pseudomonadati</taxon>
        <taxon>Pseudomonadota</taxon>
        <taxon>Gammaproteobacteria</taxon>
        <taxon>Enterobacterales</taxon>
        <taxon>Enterobacteriaceae</taxon>
        <taxon>Escherichia</taxon>
    </lineage>
</organism>
<gene>
    <name evidence="1" type="primary">engB</name>
    <name type="ordered locus">c4812</name>
</gene>
<reference key="1">
    <citation type="journal article" date="2002" name="Proc. Natl. Acad. Sci. U.S.A.">
        <title>Extensive mosaic structure revealed by the complete genome sequence of uropathogenic Escherichia coli.</title>
        <authorList>
            <person name="Welch R.A."/>
            <person name="Burland V."/>
            <person name="Plunkett G. III"/>
            <person name="Redford P."/>
            <person name="Roesch P."/>
            <person name="Rasko D."/>
            <person name="Buckles E.L."/>
            <person name="Liou S.-R."/>
            <person name="Boutin A."/>
            <person name="Hackett J."/>
            <person name="Stroud D."/>
            <person name="Mayhew G.F."/>
            <person name="Rose D.J."/>
            <person name="Zhou S."/>
            <person name="Schwartz D.C."/>
            <person name="Perna N.T."/>
            <person name="Mobley H.L.T."/>
            <person name="Donnenberg M.S."/>
            <person name="Blattner F.R."/>
        </authorList>
    </citation>
    <scope>NUCLEOTIDE SEQUENCE [LARGE SCALE GENOMIC DNA]</scope>
    <source>
        <strain>CFT073 / ATCC 700928 / UPEC</strain>
    </source>
</reference>
<dbReference type="EMBL" id="AE014075">
    <property type="protein sequence ID" value="AAN83241.1"/>
    <property type="status" value="ALT_INIT"/>
    <property type="molecule type" value="Genomic_DNA"/>
</dbReference>
<dbReference type="SMR" id="P0A6P8"/>
<dbReference type="STRING" id="199310.c4812"/>
<dbReference type="KEGG" id="ecc:c4812"/>
<dbReference type="eggNOG" id="COG0218">
    <property type="taxonomic scope" value="Bacteria"/>
</dbReference>
<dbReference type="HOGENOM" id="CLU_033732_1_0_6"/>
<dbReference type="Proteomes" id="UP000001410">
    <property type="component" value="Chromosome"/>
</dbReference>
<dbReference type="GO" id="GO:0005829">
    <property type="term" value="C:cytosol"/>
    <property type="evidence" value="ECO:0007669"/>
    <property type="project" value="TreeGrafter"/>
</dbReference>
<dbReference type="GO" id="GO:0005525">
    <property type="term" value="F:GTP binding"/>
    <property type="evidence" value="ECO:0007669"/>
    <property type="project" value="UniProtKB-UniRule"/>
</dbReference>
<dbReference type="GO" id="GO:0046872">
    <property type="term" value="F:metal ion binding"/>
    <property type="evidence" value="ECO:0007669"/>
    <property type="project" value="UniProtKB-KW"/>
</dbReference>
<dbReference type="GO" id="GO:0000917">
    <property type="term" value="P:division septum assembly"/>
    <property type="evidence" value="ECO:0007669"/>
    <property type="project" value="UniProtKB-KW"/>
</dbReference>
<dbReference type="CDD" id="cd01876">
    <property type="entry name" value="YihA_EngB"/>
    <property type="match status" value="1"/>
</dbReference>
<dbReference type="FunFam" id="3.40.50.300:FF:000098">
    <property type="entry name" value="Probable GTP-binding protein EngB"/>
    <property type="match status" value="1"/>
</dbReference>
<dbReference type="Gene3D" id="3.40.50.300">
    <property type="entry name" value="P-loop containing nucleotide triphosphate hydrolases"/>
    <property type="match status" value="1"/>
</dbReference>
<dbReference type="HAMAP" id="MF_00321">
    <property type="entry name" value="GTPase_EngB"/>
    <property type="match status" value="1"/>
</dbReference>
<dbReference type="InterPro" id="IPR030393">
    <property type="entry name" value="G_ENGB_dom"/>
</dbReference>
<dbReference type="InterPro" id="IPR006073">
    <property type="entry name" value="GTP-bd"/>
</dbReference>
<dbReference type="InterPro" id="IPR019987">
    <property type="entry name" value="GTP-bd_ribosome_bio_YsxC"/>
</dbReference>
<dbReference type="InterPro" id="IPR027417">
    <property type="entry name" value="P-loop_NTPase"/>
</dbReference>
<dbReference type="NCBIfam" id="TIGR03598">
    <property type="entry name" value="GTPase_YsxC"/>
    <property type="match status" value="1"/>
</dbReference>
<dbReference type="PANTHER" id="PTHR11649:SF13">
    <property type="entry name" value="ENGB-TYPE G DOMAIN-CONTAINING PROTEIN"/>
    <property type="match status" value="1"/>
</dbReference>
<dbReference type="PANTHER" id="PTHR11649">
    <property type="entry name" value="MSS1/TRME-RELATED GTP-BINDING PROTEIN"/>
    <property type="match status" value="1"/>
</dbReference>
<dbReference type="Pfam" id="PF01926">
    <property type="entry name" value="MMR_HSR1"/>
    <property type="match status" value="1"/>
</dbReference>
<dbReference type="SUPFAM" id="SSF52540">
    <property type="entry name" value="P-loop containing nucleoside triphosphate hydrolases"/>
    <property type="match status" value="1"/>
</dbReference>
<dbReference type="PROSITE" id="PS51706">
    <property type="entry name" value="G_ENGB"/>
    <property type="match status" value="1"/>
</dbReference>